<proteinExistence type="evidence at protein level"/>
<accession>Q21771</accession>
<name>CPG3_CAEEL</name>
<organism>
    <name type="scientific">Caenorhabditis elegans</name>
    <dbReference type="NCBI Taxonomy" id="6239"/>
    <lineage>
        <taxon>Eukaryota</taxon>
        <taxon>Metazoa</taxon>
        <taxon>Ecdysozoa</taxon>
        <taxon>Nematoda</taxon>
        <taxon>Chromadorea</taxon>
        <taxon>Rhabditida</taxon>
        <taxon>Rhabditina</taxon>
        <taxon>Rhabditomorpha</taxon>
        <taxon>Rhabditoidea</taxon>
        <taxon>Rhabditidae</taxon>
        <taxon>Peloderinae</taxon>
        <taxon>Caenorhabditis</taxon>
    </lineage>
</organism>
<feature type="signal peptide" evidence="1">
    <location>
        <begin position="1"/>
        <end position="17"/>
    </location>
</feature>
<feature type="chain" id="PRO_0000320222" description="Chondroitin proteoglycan 3">
    <location>
        <begin position="18"/>
        <end position="292"/>
    </location>
</feature>
<feature type="region of interest" description="Disordered" evidence="2">
    <location>
        <begin position="28"/>
        <end position="103"/>
    </location>
</feature>
<feature type="compositionally biased region" description="Low complexity" evidence="2">
    <location>
        <begin position="38"/>
        <end position="80"/>
    </location>
</feature>
<feature type="compositionally biased region" description="Acidic residues" evidence="2">
    <location>
        <begin position="81"/>
        <end position="96"/>
    </location>
</feature>
<feature type="glycosylation site" description="N-linked (GlcNAc...) asparagine" evidence="3">
    <location>
        <position position="174"/>
    </location>
</feature>
<feature type="glycosylation site" description="N-linked (GlcNAc...) asparagine" evidence="1">
    <location>
        <position position="254"/>
    </location>
</feature>
<protein>
    <recommendedName>
        <fullName>Chondroitin proteoglycan 3</fullName>
    </recommendedName>
</protein>
<reference evidence="4 5" key="1">
    <citation type="journal article" date="2006" name="J. Cell Biol.">
        <title>Identification of novel chondroitin proteoglycans in Caenorhabditis elegans: embryonic cell division depends on CPG-1 and CPG-2.</title>
        <authorList>
            <person name="Olson S.K."/>
            <person name="Bishop J.R."/>
            <person name="Yates J.R."/>
            <person name="Oegema K."/>
            <person name="Esko J.D."/>
        </authorList>
    </citation>
    <scope>NUCLEOTIDE SEQUENCE [MRNA]</scope>
    <scope>IDENTIFICATION BY MASS SPECTROMETRY</scope>
</reference>
<reference evidence="6" key="2">
    <citation type="journal article" date="1998" name="Science">
        <title>Genome sequence of the nematode C. elegans: a platform for investigating biology.</title>
        <authorList>
            <consortium name="The C. elegans sequencing consortium"/>
        </authorList>
    </citation>
    <scope>NUCLEOTIDE SEQUENCE [LARGE SCALE GENOMIC DNA]</scope>
    <source>
        <strain>Bristol N2</strain>
    </source>
</reference>
<reference key="3">
    <citation type="journal article" date="2007" name="Mol. Cell. Proteomics">
        <title>Proteomics reveals N-linked glycoprotein diversity in Caenorhabditis elegans and suggests an atypical translocation mechanism for integral membrane proteins.</title>
        <authorList>
            <person name="Kaji H."/>
            <person name="Kamiie J."/>
            <person name="Kawakami H."/>
            <person name="Kido K."/>
            <person name="Yamauchi Y."/>
            <person name="Shinkawa T."/>
            <person name="Taoka M."/>
            <person name="Takahashi N."/>
            <person name="Isobe T."/>
        </authorList>
    </citation>
    <scope>GLYCOSYLATION [LARGE SCALE ANALYSIS] AT ASN-174</scope>
    <scope>IDENTIFICATION BY MASS SPECTROMETRY</scope>
    <source>
        <strain>Bristol N2</strain>
    </source>
</reference>
<sequence>MRFVFIIALLLIGASLAHPADPIRAKRDVSASEDEFSGDSSGEISGESSGEASGEASGEASGEASGEASGESSGETSGESSGDEETSGEGSGEEGSGDTSPVVPVDELTLQQLETLNTYAQQVQAESQKLIHQANFVITEMTALSANAQNLGILSNIVLANSQMVLDSARLSLNETETETGTSAPATCVSSAVCYGDSGCGSGKCIGALAGTCNCNSCVFGWPCQEDSACGGFNGACNSITATCDCFAAYTKNNLTLAEALTSFCNVETCNGAEDNVEKCHGLPCNYGFCVC</sequence>
<keyword id="KW-0325">Glycoprotein</keyword>
<keyword id="KW-0654">Proteoglycan</keyword>
<keyword id="KW-1185">Reference proteome</keyword>
<keyword id="KW-0732">Signal</keyword>
<gene>
    <name evidence="6 7" type="primary">cpg-3</name>
    <name type="ORF">R06C7.4</name>
</gene>
<dbReference type="EMBL" id="DQ340625">
    <property type="protein sequence ID" value="ABC65813.1"/>
    <property type="molecule type" value="mRNA"/>
</dbReference>
<dbReference type="EMBL" id="Z71266">
    <property type="protein sequence ID" value="CAA95840.1"/>
    <property type="molecule type" value="Genomic_DNA"/>
</dbReference>
<dbReference type="PIR" id="T23966">
    <property type="entry name" value="T23966"/>
</dbReference>
<dbReference type="RefSeq" id="NP_492047.1">
    <property type="nucleotide sequence ID" value="NM_059646.8"/>
</dbReference>
<dbReference type="SMR" id="Q21771"/>
<dbReference type="BioGRID" id="37908">
    <property type="interactions" value="4"/>
</dbReference>
<dbReference type="FunCoup" id="Q21771">
    <property type="interactions" value="1494"/>
</dbReference>
<dbReference type="IntAct" id="Q21771">
    <property type="interactions" value="2"/>
</dbReference>
<dbReference type="STRING" id="6239.R06C7.4.3"/>
<dbReference type="GlyCosmos" id="Q21771">
    <property type="glycosylation" value="2 sites, No reported glycans"/>
</dbReference>
<dbReference type="iPTMnet" id="Q21771"/>
<dbReference type="PaxDb" id="6239-R06C7.4.1"/>
<dbReference type="PeptideAtlas" id="Q21771"/>
<dbReference type="EnsemblMetazoa" id="R06C7.4.1">
    <property type="protein sequence ID" value="R06C7.4.1"/>
    <property type="gene ID" value="WBGene00011063"/>
</dbReference>
<dbReference type="EnsemblMetazoa" id="R06C7.4.2">
    <property type="protein sequence ID" value="R06C7.4.2"/>
    <property type="gene ID" value="WBGene00011063"/>
</dbReference>
<dbReference type="GeneID" id="172465"/>
<dbReference type="KEGG" id="cel:CELE_R06C7.4"/>
<dbReference type="UCSC" id="R06C7.4.3">
    <property type="organism name" value="c. elegans"/>
</dbReference>
<dbReference type="AGR" id="WB:WBGene00011063"/>
<dbReference type="CTD" id="172465"/>
<dbReference type="WormBase" id="R06C7.4">
    <property type="protein sequence ID" value="CE06247"/>
    <property type="gene ID" value="WBGene00011063"/>
    <property type="gene designation" value="cpg-3"/>
</dbReference>
<dbReference type="eggNOG" id="ENOG502RT8N">
    <property type="taxonomic scope" value="Eukaryota"/>
</dbReference>
<dbReference type="GeneTree" id="ENSGT01060000253262"/>
<dbReference type="HOGENOM" id="CLU_1009114_0_0_1"/>
<dbReference type="InParanoid" id="Q21771"/>
<dbReference type="OMA" id="FVITEMT"/>
<dbReference type="OrthoDB" id="5822889at2759"/>
<dbReference type="PRO" id="PR:Q21771"/>
<dbReference type="Proteomes" id="UP000001940">
    <property type="component" value="Chromosome I"/>
</dbReference>
<dbReference type="Bgee" id="WBGene00011063">
    <property type="expression patterns" value="Expressed in germ line (C elegans) and 3 other cell types or tissues"/>
</dbReference>
<dbReference type="InterPro" id="IPR039260">
    <property type="entry name" value="Cpg-3"/>
</dbReference>
<dbReference type="PANTHER" id="PTHR37973">
    <property type="entry name" value="CHONDROITIN PROTEOGLYCAN 3"/>
    <property type="match status" value="1"/>
</dbReference>
<dbReference type="PANTHER" id="PTHR37973:SF3">
    <property type="entry name" value="CHONDROITIN PROTEOGLYCAN 3-RELATED"/>
    <property type="match status" value="1"/>
</dbReference>
<evidence type="ECO:0000255" key="1"/>
<evidence type="ECO:0000256" key="2">
    <source>
        <dbReference type="SAM" id="MobiDB-lite"/>
    </source>
</evidence>
<evidence type="ECO:0000269" key="3">
    <source>
    </source>
</evidence>
<evidence type="ECO:0000305" key="4"/>
<evidence type="ECO:0000312" key="5">
    <source>
        <dbReference type="EMBL" id="ABC65813.1"/>
    </source>
</evidence>
<evidence type="ECO:0000312" key="6">
    <source>
        <dbReference type="EMBL" id="CAA95840.1"/>
    </source>
</evidence>
<evidence type="ECO:0000312" key="7">
    <source>
        <dbReference type="WormBase" id="R06C7.4"/>
    </source>
</evidence>